<dbReference type="EC" id="2.7.7.8" evidence="1"/>
<dbReference type="EMBL" id="CP000285">
    <property type="protein sequence ID" value="ABE60414.1"/>
    <property type="molecule type" value="Genomic_DNA"/>
</dbReference>
<dbReference type="RefSeq" id="WP_011508360.1">
    <property type="nucleotide sequence ID" value="NC_007963.1"/>
</dbReference>
<dbReference type="SMR" id="Q1QSZ4"/>
<dbReference type="STRING" id="290398.Csal_3070"/>
<dbReference type="GeneID" id="95335764"/>
<dbReference type="KEGG" id="csa:Csal_3070"/>
<dbReference type="eggNOG" id="COG1185">
    <property type="taxonomic scope" value="Bacteria"/>
</dbReference>
<dbReference type="HOGENOM" id="CLU_004217_2_2_6"/>
<dbReference type="OrthoDB" id="9804305at2"/>
<dbReference type="Proteomes" id="UP000000239">
    <property type="component" value="Chromosome"/>
</dbReference>
<dbReference type="GO" id="GO:0005829">
    <property type="term" value="C:cytosol"/>
    <property type="evidence" value="ECO:0007669"/>
    <property type="project" value="TreeGrafter"/>
</dbReference>
<dbReference type="GO" id="GO:0000175">
    <property type="term" value="F:3'-5'-RNA exonuclease activity"/>
    <property type="evidence" value="ECO:0007669"/>
    <property type="project" value="TreeGrafter"/>
</dbReference>
<dbReference type="GO" id="GO:0000287">
    <property type="term" value="F:magnesium ion binding"/>
    <property type="evidence" value="ECO:0007669"/>
    <property type="project" value="UniProtKB-UniRule"/>
</dbReference>
<dbReference type="GO" id="GO:0004654">
    <property type="term" value="F:polyribonucleotide nucleotidyltransferase activity"/>
    <property type="evidence" value="ECO:0007669"/>
    <property type="project" value="UniProtKB-UniRule"/>
</dbReference>
<dbReference type="GO" id="GO:0003723">
    <property type="term" value="F:RNA binding"/>
    <property type="evidence" value="ECO:0007669"/>
    <property type="project" value="UniProtKB-UniRule"/>
</dbReference>
<dbReference type="GO" id="GO:0006402">
    <property type="term" value="P:mRNA catabolic process"/>
    <property type="evidence" value="ECO:0007669"/>
    <property type="project" value="UniProtKB-UniRule"/>
</dbReference>
<dbReference type="GO" id="GO:0006396">
    <property type="term" value="P:RNA processing"/>
    <property type="evidence" value="ECO:0007669"/>
    <property type="project" value="InterPro"/>
</dbReference>
<dbReference type="CDD" id="cd02393">
    <property type="entry name" value="KH-I_PNPase"/>
    <property type="match status" value="1"/>
</dbReference>
<dbReference type="CDD" id="cd11363">
    <property type="entry name" value="RNase_PH_PNPase_1"/>
    <property type="match status" value="1"/>
</dbReference>
<dbReference type="CDD" id="cd11364">
    <property type="entry name" value="RNase_PH_PNPase_2"/>
    <property type="match status" value="1"/>
</dbReference>
<dbReference type="CDD" id="cd04472">
    <property type="entry name" value="S1_PNPase"/>
    <property type="match status" value="1"/>
</dbReference>
<dbReference type="FunFam" id="2.40.50.140:FF:000023">
    <property type="entry name" value="Polyribonucleotide nucleotidyltransferase"/>
    <property type="match status" value="1"/>
</dbReference>
<dbReference type="FunFam" id="3.30.1370.10:FF:000001">
    <property type="entry name" value="Polyribonucleotide nucleotidyltransferase"/>
    <property type="match status" value="1"/>
</dbReference>
<dbReference type="FunFam" id="3.30.230.70:FF:000001">
    <property type="entry name" value="Polyribonucleotide nucleotidyltransferase"/>
    <property type="match status" value="1"/>
</dbReference>
<dbReference type="FunFam" id="3.30.230.70:FF:000002">
    <property type="entry name" value="Polyribonucleotide nucleotidyltransferase"/>
    <property type="match status" value="1"/>
</dbReference>
<dbReference type="Gene3D" id="3.30.230.70">
    <property type="entry name" value="GHMP Kinase, N-terminal domain"/>
    <property type="match status" value="2"/>
</dbReference>
<dbReference type="Gene3D" id="3.30.1370.10">
    <property type="entry name" value="K Homology domain, type 1"/>
    <property type="match status" value="1"/>
</dbReference>
<dbReference type="Gene3D" id="2.40.50.140">
    <property type="entry name" value="Nucleic acid-binding proteins"/>
    <property type="match status" value="1"/>
</dbReference>
<dbReference type="HAMAP" id="MF_01595">
    <property type="entry name" value="PNPase"/>
    <property type="match status" value="1"/>
</dbReference>
<dbReference type="InterPro" id="IPR001247">
    <property type="entry name" value="ExoRNase_PH_dom1"/>
</dbReference>
<dbReference type="InterPro" id="IPR015847">
    <property type="entry name" value="ExoRNase_PH_dom2"/>
</dbReference>
<dbReference type="InterPro" id="IPR036345">
    <property type="entry name" value="ExoRNase_PH_dom2_sf"/>
</dbReference>
<dbReference type="InterPro" id="IPR004087">
    <property type="entry name" value="KH_dom"/>
</dbReference>
<dbReference type="InterPro" id="IPR004088">
    <property type="entry name" value="KH_dom_type_1"/>
</dbReference>
<dbReference type="InterPro" id="IPR036612">
    <property type="entry name" value="KH_dom_type_1_sf"/>
</dbReference>
<dbReference type="InterPro" id="IPR012340">
    <property type="entry name" value="NA-bd_OB-fold"/>
</dbReference>
<dbReference type="InterPro" id="IPR012162">
    <property type="entry name" value="PNPase"/>
</dbReference>
<dbReference type="InterPro" id="IPR027408">
    <property type="entry name" value="PNPase/RNase_PH_dom_sf"/>
</dbReference>
<dbReference type="InterPro" id="IPR015848">
    <property type="entry name" value="PNPase_PH_RNA-bd_bac/org-type"/>
</dbReference>
<dbReference type="InterPro" id="IPR036456">
    <property type="entry name" value="PNPase_PH_RNA-bd_sf"/>
</dbReference>
<dbReference type="InterPro" id="IPR020568">
    <property type="entry name" value="Ribosomal_Su5_D2-typ_SF"/>
</dbReference>
<dbReference type="InterPro" id="IPR003029">
    <property type="entry name" value="S1_domain"/>
</dbReference>
<dbReference type="NCBIfam" id="TIGR03591">
    <property type="entry name" value="polynuc_phos"/>
    <property type="match status" value="1"/>
</dbReference>
<dbReference type="NCBIfam" id="NF008805">
    <property type="entry name" value="PRK11824.1"/>
    <property type="match status" value="1"/>
</dbReference>
<dbReference type="PANTHER" id="PTHR11252">
    <property type="entry name" value="POLYRIBONUCLEOTIDE NUCLEOTIDYLTRANSFERASE"/>
    <property type="match status" value="1"/>
</dbReference>
<dbReference type="PANTHER" id="PTHR11252:SF0">
    <property type="entry name" value="POLYRIBONUCLEOTIDE NUCLEOTIDYLTRANSFERASE 1, MITOCHONDRIAL"/>
    <property type="match status" value="1"/>
</dbReference>
<dbReference type="Pfam" id="PF00013">
    <property type="entry name" value="KH_1"/>
    <property type="match status" value="1"/>
</dbReference>
<dbReference type="Pfam" id="PF03726">
    <property type="entry name" value="PNPase"/>
    <property type="match status" value="1"/>
</dbReference>
<dbReference type="Pfam" id="PF01138">
    <property type="entry name" value="RNase_PH"/>
    <property type="match status" value="2"/>
</dbReference>
<dbReference type="Pfam" id="PF03725">
    <property type="entry name" value="RNase_PH_C"/>
    <property type="match status" value="2"/>
</dbReference>
<dbReference type="Pfam" id="PF00575">
    <property type="entry name" value="S1"/>
    <property type="match status" value="1"/>
</dbReference>
<dbReference type="PIRSF" id="PIRSF005499">
    <property type="entry name" value="PNPase"/>
    <property type="match status" value="1"/>
</dbReference>
<dbReference type="SMART" id="SM00322">
    <property type="entry name" value="KH"/>
    <property type="match status" value="1"/>
</dbReference>
<dbReference type="SMART" id="SM00316">
    <property type="entry name" value="S1"/>
    <property type="match status" value="1"/>
</dbReference>
<dbReference type="SUPFAM" id="SSF54791">
    <property type="entry name" value="Eukaryotic type KH-domain (KH-domain type I)"/>
    <property type="match status" value="1"/>
</dbReference>
<dbReference type="SUPFAM" id="SSF50249">
    <property type="entry name" value="Nucleic acid-binding proteins"/>
    <property type="match status" value="1"/>
</dbReference>
<dbReference type="SUPFAM" id="SSF46915">
    <property type="entry name" value="Polynucleotide phosphorylase/guanosine pentaphosphate synthase (PNPase/GPSI), domain 3"/>
    <property type="match status" value="1"/>
</dbReference>
<dbReference type="SUPFAM" id="SSF55666">
    <property type="entry name" value="Ribonuclease PH domain 2-like"/>
    <property type="match status" value="2"/>
</dbReference>
<dbReference type="SUPFAM" id="SSF54211">
    <property type="entry name" value="Ribosomal protein S5 domain 2-like"/>
    <property type="match status" value="2"/>
</dbReference>
<dbReference type="PROSITE" id="PS50084">
    <property type="entry name" value="KH_TYPE_1"/>
    <property type="match status" value="1"/>
</dbReference>
<dbReference type="PROSITE" id="PS50126">
    <property type="entry name" value="S1"/>
    <property type="match status" value="1"/>
</dbReference>
<organism>
    <name type="scientific">Chromohalobacter salexigens (strain ATCC BAA-138 / DSM 3043 / CIP 106854 / NCIMB 13768 / 1H11)</name>
    <dbReference type="NCBI Taxonomy" id="290398"/>
    <lineage>
        <taxon>Bacteria</taxon>
        <taxon>Pseudomonadati</taxon>
        <taxon>Pseudomonadota</taxon>
        <taxon>Gammaproteobacteria</taxon>
        <taxon>Oceanospirillales</taxon>
        <taxon>Halomonadaceae</taxon>
        <taxon>Chromohalobacter</taxon>
    </lineage>
</organism>
<accession>Q1QSZ4</accession>
<protein>
    <recommendedName>
        <fullName evidence="1">Polyribonucleotide nucleotidyltransferase</fullName>
        <ecNumber evidence="1">2.7.7.8</ecNumber>
    </recommendedName>
    <alternativeName>
        <fullName evidence="1">Polynucleotide phosphorylase</fullName>
        <shortName evidence="1">PNPase</shortName>
    </alternativeName>
</protein>
<evidence type="ECO:0000255" key="1">
    <source>
        <dbReference type="HAMAP-Rule" id="MF_01595"/>
    </source>
</evidence>
<sequence length="707" mass="76562">MNPVKKTFQYGHSTVTLETGRIARQATGAVMVTMDDTVVLCTVVAKKDVNPAQPFFPLSVHYQEKTYAVGKIPGGFFKREGRPTEKETLTSRLIDRPIRPLFPNGFMNEVQVVCTVLSTDRNHDPDIAAMLGTSAALAISGVPFNGPIGAARVGFNEDKGYFLNPTVEELESSELNMVVAGTEKAVLMVESEAKELLEDEMLGAVLFGHQEMQAAITAIQALADEAGKPRWDWQPPTDDTTLKSALAAEFEAKVGEAYRITDKMARQDALSALKDEALERLAGEESGQYAADDVKGAFASLEKRVVRSRIIQGEPRIDGRDHRTVRPLSIEVGTLPKTHGSAVFTRGETQAVVVATLGTLRDAQLIESLEGERKDRFLLHYNFPPYSVGEAGFMGGPKRREIGHGRLARRGVQAMLPSEEDFPYTIRVVSEITESNGSSSMASVCGSSLALMDAGVPLKAPVAGIAMGLVKDEDGFAVLTDILGDEDHLGDMDFKVAGSTAGVTALQMDIKIEGINEEIMETALQQAHEARLHILEQMNTVIAQSRSEVSDNAPSMATIKIDPDKIRDVIGKGGATIRKICDDTGASIDLDDDGTVRIYAEDKTAAKAAIDTVLAITAEPEIGKLYRGTVARITDFGAFVTFMPGTDGLVHISQIVPERVNDVRDYLSEGQEVIVKVLDIDNRNRVKLSIKEVTAEEKAAFEATPAE</sequence>
<feature type="chain" id="PRO_0000329590" description="Polyribonucleotide nucleotidyltransferase">
    <location>
        <begin position="1"/>
        <end position="707"/>
    </location>
</feature>
<feature type="domain" description="KH" evidence="1">
    <location>
        <begin position="554"/>
        <end position="613"/>
    </location>
</feature>
<feature type="domain" description="S1 motif" evidence="1">
    <location>
        <begin position="623"/>
        <end position="691"/>
    </location>
</feature>
<feature type="binding site" evidence="1">
    <location>
        <position position="487"/>
    </location>
    <ligand>
        <name>Mg(2+)</name>
        <dbReference type="ChEBI" id="CHEBI:18420"/>
    </ligand>
</feature>
<feature type="binding site" evidence="1">
    <location>
        <position position="493"/>
    </location>
    <ligand>
        <name>Mg(2+)</name>
        <dbReference type="ChEBI" id="CHEBI:18420"/>
    </ligand>
</feature>
<keyword id="KW-0963">Cytoplasm</keyword>
<keyword id="KW-0460">Magnesium</keyword>
<keyword id="KW-0479">Metal-binding</keyword>
<keyword id="KW-0548">Nucleotidyltransferase</keyword>
<keyword id="KW-1185">Reference proteome</keyword>
<keyword id="KW-0694">RNA-binding</keyword>
<keyword id="KW-0808">Transferase</keyword>
<gene>
    <name evidence="1" type="primary">pnp</name>
    <name type="ordered locus">Csal_3070</name>
</gene>
<comment type="function">
    <text evidence="1">Involved in mRNA degradation. Catalyzes the phosphorolysis of single-stranded polyribonucleotides processively in the 3'- to 5'-direction.</text>
</comment>
<comment type="catalytic activity">
    <reaction evidence="1">
        <text>RNA(n+1) + phosphate = RNA(n) + a ribonucleoside 5'-diphosphate</text>
        <dbReference type="Rhea" id="RHEA:22096"/>
        <dbReference type="Rhea" id="RHEA-COMP:14527"/>
        <dbReference type="Rhea" id="RHEA-COMP:17342"/>
        <dbReference type="ChEBI" id="CHEBI:43474"/>
        <dbReference type="ChEBI" id="CHEBI:57930"/>
        <dbReference type="ChEBI" id="CHEBI:140395"/>
        <dbReference type="EC" id="2.7.7.8"/>
    </reaction>
</comment>
<comment type="cofactor">
    <cofactor evidence="1">
        <name>Mg(2+)</name>
        <dbReference type="ChEBI" id="CHEBI:18420"/>
    </cofactor>
</comment>
<comment type="subunit">
    <text evidence="1">Component of the RNA degradosome, which is a multiprotein complex involved in RNA processing and mRNA degradation.</text>
</comment>
<comment type="subcellular location">
    <subcellularLocation>
        <location evidence="1">Cytoplasm</location>
    </subcellularLocation>
</comment>
<comment type="similarity">
    <text evidence="1">Belongs to the polyribonucleotide nucleotidyltransferase family.</text>
</comment>
<reference key="1">
    <citation type="journal article" date="2011" name="Stand. Genomic Sci.">
        <title>Complete genome sequence of the halophilic and highly halotolerant Chromohalobacter salexigens type strain (1H11(T)).</title>
        <authorList>
            <person name="Copeland A."/>
            <person name="O'Connor K."/>
            <person name="Lucas S."/>
            <person name="Lapidus A."/>
            <person name="Berry K.W."/>
            <person name="Detter J.C."/>
            <person name="Del Rio T.G."/>
            <person name="Hammon N."/>
            <person name="Dalin E."/>
            <person name="Tice H."/>
            <person name="Pitluck S."/>
            <person name="Bruce D."/>
            <person name="Goodwin L."/>
            <person name="Han C."/>
            <person name="Tapia R."/>
            <person name="Saunders E."/>
            <person name="Schmutz J."/>
            <person name="Brettin T."/>
            <person name="Larimer F."/>
            <person name="Land M."/>
            <person name="Hauser L."/>
            <person name="Vargas C."/>
            <person name="Nieto J.J."/>
            <person name="Kyrpides N.C."/>
            <person name="Ivanova N."/>
            <person name="Goker M."/>
            <person name="Klenk H.P."/>
            <person name="Csonka L.N."/>
            <person name="Woyke T."/>
        </authorList>
    </citation>
    <scope>NUCLEOTIDE SEQUENCE [LARGE SCALE GENOMIC DNA]</scope>
    <source>
        <strain>ATCC BAA-138 / DSM 3043 / CIP 106854 / NCIMB 13768 / 1H11</strain>
    </source>
</reference>
<proteinExistence type="inferred from homology"/>
<name>PNP_CHRSD</name>